<protein>
    <recommendedName>
        <fullName>Eukaryotic translation initiation factor 2-alpha kinase 1</fullName>
        <ecNumber evidence="11 22 25">2.7.11.1</ecNumber>
    </recommendedName>
    <alternativeName>
        <fullName>Heme-controlled repressor</fullName>
        <shortName>HCR</shortName>
    </alternativeName>
    <alternativeName>
        <fullName evidence="18">Heme-regulated eukaryotic initiation factor eIF-2-alpha kinase</fullName>
    </alternativeName>
    <alternativeName>
        <fullName evidence="19">Heme-regulated inhibitor</fullName>
    </alternativeName>
    <alternativeName>
        <fullName evidence="20">Hemin-sensitive initiation factor 2-alpha kinase</fullName>
    </alternativeName>
</protein>
<name>E2AK1_MOUSE</name>
<keyword id="KW-0067">ATP-binding</keyword>
<keyword id="KW-0963">Cytoplasm</keyword>
<keyword id="KW-1015">Disulfide bond</keyword>
<keyword id="KW-0418">Kinase</keyword>
<keyword id="KW-0547">Nucleotide-binding</keyword>
<keyword id="KW-0597">Phosphoprotein</keyword>
<keyword id="KW-0652">Protein synthesis inhibitor</keyword>
<keyword id="KW-1185">Reference proteome</keyword>
<keyword id="KW-0677">Repeat</keyword>
<keyword id="KW-0723">Serine/threonine-protein kinase</keyword>
<keyword id="KW-0808">Transferase</keyword>
<keyword id="KW-0832">Ubl conjugation</keyword>
<evidence type="ECO:0000250" key="1">
    <source>
        <dbReference type="UniProtKB" id="P33279"/>
    </source>
</evidence>
<evidence type="ECO:0000250" key="2">
    <source>
        <dbReference type="UniProtKB" id="Q63185"/>
    </source>
</evidence>
<evidence type="ECO:0000250" key="3">
    <source>
        <dbReference type="UniProtKB" id="Q9BQI3"/>
    </source>
</evidence>
<evidence type="ECO:0000255" key="4">
    <source>
        <dbReference type="PROSITE-ProRule" id="PRU00159"/>
    </source>
</evidence>
<evidence type="ECO:0000255" key="5">
    <source>
        <dbReference type="PROSITE-ProRule" id="PRU10027"/>
    </source>
</evidence>
<evidence type="ECO:0000256" key="6">
    <source>
        <dbReference type="SAM" id="MobiDB-lite"/>
    </source>
</evidence>
<evidence type="ECO:0000269" key="7">
    <source>
    </source>
</evidence>
<evidence type="ECO:0000269" key="8">
    <source>
    </source>
</evidence>
<evidence type="ECO:0000269" key="9">
    <source>
    </source>
</evidence>
<evidence type="ECO:0000269" key="10">
    <source>
    </source>
</evidence>
<evidence type="ECO:0000269" key="11">
    <source>
    </source>
</evidence>
<evidence type="ECO:0000269" key="12">
    <source>
    </source>
</evidence>
<evidence type="ECO:0000269" key="13">
    <source>
    </source>
</evidence>
<evidence type="ECO:0000269" key="14">
    <source>
    </source>
</evidence>
<evidence type="ECO:0000269" key="15">
    <source>
    </source>
</evidence>
<evidence type="ECO:0000269" key="16">
    <source>
    </source>
</evidence>
<evidence type="ECO:0000269" key="17">
    <source>
    </source>
</evidence>
<evidence type="ECO:0000303" key="18">
    <source>
    </source>
</evidence>
<evidence type="ECO:0000303" key="19">
    <source>
    </source>
</evidence>
<evidence type="ECO:0000303" key="20">
    <source>
    </source>
</evidence>
<evidence type="ECO:0000305" key="21"/>
<evidence type="ECO:0000305" key="22">
    <source>
    </source>
</evidence>
<evidence type="ECO:0000305" key="23">
    <source>
    </source>
</evidence>
<evidence type="ECO:0000305" key="24">
    <source>
    </source>
</evidence>
<evidence type="ECO:0000305" key="25">
    <source>
    </source>
</evidence>
<evidence type="ECO:0000312" key="26">
    <source>
        <dbReference type="MGI" id="MGI:1353448"/>
    </source>
</evidence>
<proteinExistence type="evidence at protein level"/>
<comment type="function">
    <text evidence="3 7 10 11 13 14 16">Metabolic-stress sensing protein kinase that phosphorylates the alpha subunit of eukaryotic translation initiation factor 2 (EIF2S1/eIF-2-alpha) in response to various stress conditions (PubMed:11726526, PubMed:12767237, PubMed:16893190). Key activator of the integrated stress response (ISR) required for adaptation to various stress, such as heme deficiency, oxidative stress, osmotic shock, mitochondrial dysfunction and heat shock (PubMed:11726526, PubMed:16893190). EIF2S1/eIF-2-alpha phosphorylation in response to stress converts EIF2S1/eIF-2-alpha in a global protein synthesis inhibitor, leading to a global attenuation of cap-dependent translation, while concomitantly initiating the preferential translation of ISR-specific mRNAs, such as the transcriptional activator ATF4, and hence allowing ATF4-mediated reprogramming (PubMed:11726526, PubMed:16893190). Acts as a key sensor of heme-deficiency: in normal conditions, binds hemin via a cysteine thiolate and histidine nitrogenous coordination, leading to inhibit the protein kinase activity (PubMed:16893190). This binding occurs with moderate affinity, allowing it to sense the heme concentration within the cell: heme depletion relieves inhibition and stimulates kinase activity, activating the ISR (PubMed:16893190). Thanks to this unique heme-sensing capacity, plays a crucial role to shut off protein synthesis during acute heme-deficient conditions (PubMed:16893190). In red blood cells (RBCs), controls hemoglobin synthesis ensuring a coordinated regulation of the synthesis of its heme and globin moieties (PubMed:11050009, PubMed:11726526, PubMed:15931390). It thereby plays an essential protective role for RBC survival in anemias of iron deficiency (PubMed:11726526). Iron deficiency also triggers activation by full-length DELE1 (By similarity). Also activates the ISR in response to mitochondrial dysfunction: HRI/EIF2AK1 protein kinase activity is activated upon binding to the processed form of DELE1 (S-DELE1), thereby promoting the ATF4-mediated reprogramming (By similarity). Also acts as an activator of mitophagy in response to mitochondrial damage: catalyzes phosphorylation of eIF-2-alpha (EIF2S1) following activation by S-DELE1, thereby promoting mitochondrial localization of EIF2S1, triggering PRKN-independent mitophagy (By similarity).</text>
</comment>
<comment type="catalytic activity">
    <reaction evidence="11 22 25">
        <text>L-seryl-[protein] + ATP = O-phospho-L-seryl-[protein] + ADP + H(+)</text>
        <dbReference type="Rhea" id="RHEA:17989"/>
        <dbReference type="Rhea" id="RHEA-COMP:9863"/>
        <dbReference type="Rhea" id="RHEA-COMP:11604"/>
        <dbReference type="ChEBI" id="CHEBI:15378"/>
        <dbReference type="ChEBI" id="CHEBI:29999"/>
        <dbReference type="ChEBI" id="CHEBI:30616"/>
        <dbReference type="ChEBI" id="CHEBI:83421"/>
        <dbReference type="ChEBI" id="CHEBI:456216"/>
        <dbReference type="EC" id="2.7.11.1"/>
    </reaction>
    <physiologicalReaction direction="left-to-right" evidence="11 22 25">
        <dbReference type="Rhea" id="RHEA:17990"/>
    </physiologicalReaction>
</comment>
<comment type="catalytic activity">
    <reaction evidence="11 22 25">
        <text>L-threonyl-[protein] + ATP = O-phospho-L-threonyl-[protein] + ADP + H(+)</text>
        <dbReference type="Rhea" id="RHEA:46608"/>
        <dbReference type="Rhea" id="RHEA-COMP:11060"/>
        <dbReference type="Rhea" id="RHEA-COMP:11605"/>
        <dbReference type="ChEBI" id="CHEBI:15378"/>
        <dbReference type="ChEBI" id="CHEBI:30013"/>
        <dbReference type="ChEBI" id="CHEBI:30616"/>
        <dbReference type="ChEBI" id="CHEBI:61977"/>
        <dbReference type="ChEBI" id="CHEBI:456216"/>
        <dbReference type="EC" id="2.7.11.1"/>
    </reaction>
    <physiologicalReaction direction="left-to-right" evidence="22 25">
        <dbReference type="Rhea" id="RHEA:46609"/>
    </physiologicalReaction>
</comment>
<comment type="activity regulation">
    <text evidence="1 3 11 12 14">In normal conditions, the protein kinase activity is inhibited; inhibition is relieved by various stress conditions (PubMed:12767237, PubMed:14752110). Inhibited by heme: in presence of heme, forms a disulfide-linked inactive homodimer (By similarity). Heme depletion relieves inhibition and stimulates kinase activity by autophosphorylation (PubMed:12767237, PubMed:14752110). Inhibited by the heme metabolites biliverdin and bilirubin (PubMed:16893190). Induced by oxidative stress generated by arsenite treatment (PubMed:12767237). Binding of nitric oxide (NO) to the heme iron in the N-terminal heme-binding domain activates the kinase activity, while binding of carbon monoxide (CO) suppresses kinase activity (PubMed:14752110). Protein kinase activity is also activated upon binding to DELE1 in response to various stress, triggering the integrated stress response (ISR): activated by full-length DELE1 in response to iron deficiency, while it is activated by the processed form of DELE1 (S-DELE1) in response to mitochondrial stress (By similarity).</text>
</comment>
<comment type="subunit">
    <text evidence="1 3">Synthesized in an inactive form that binds to the N-terminal domain of CDC37 (By similarity). Has to be associated with a multiprotein complex containing Hsp90, CDC37 and PPP5C for maturation and activation by autophosphorylation. The phosphatase PPP5C modulates this activation (By similarity). Homodimer; homodimerizes in presence of heme, forming a disulfide-linked inactive homodimer (By similarity). Interacts with DELE1; binds both to full-length DELE1 and processed form of DELE1 (S-DELE1) in response to stress, leading to activate its protein kinase activity and trigger the integrated stress response (ISR) (By similarity).</text>
</comment>
<comment type="interaction">
    <interactant intactId="EBI-642878">
        <id>Q9Z2R9</id>
    </interactant>
    <interactant intactId="EBI-1202234">
        <id>Q6ZWX6</id>
        <label>Eif2s1</label>
    </interactant>
    <organismsDiffer>false</organismsDiffer>
    <experiments>6</experiments>
</comment>
<comment type="subcellular location">
    <subcellularLocation>
        <location evidence="7 15">Cytoplasm</location>
    </subcellularLocation>
</comment>
<comment type="tissue specificity">
    <text evidence="9 15">Expressed predominantly in erythroid cells, mature reticulocytes, as well as fetal liver nucleated erythroid cells (PubMed:11689689). At much lower levels, expressed in hepatocytes and bone marrow-derived macrophages (at protein level) (PubMed:17932563).</text>
</comment>
<comment type="developmental stage">
    <text evidence="15">Highly expressed in fetal liver erythroid precursor cells at 14.5 dpc (at protein level).</text>
</comment>
<comment type="induction">
    <text evidence="14">By phenobarbital.</text>
</comment>
<comment type="PTM">
    <text evidence="8 11 17">Activated by autophosphorylation; phosphorylated predominantly on serine and threonine residues, but also on tyrosine residues (PubMed:11560503, PubMed:9822714). Autophosphorylation at Thr-485 is required for kinase activation (PubMed:12767237). The active autophosphorylated form apparently is largely refractory to cellular heme fluctuations (PubMed:12767237).</text>
</comment>
<comment type="PTM">
    <text evidence="3">Ubiquitinated and degraded by the SIFI complex once the mitochondrial stress has been resolved, thereby providing stress response silencing. Within the SIFI complex, UBR4 initiates ubiquitin chain that are further elongated or branched by KCMF1.</text>
</comment>
<comment type="disruption phenotype">
    <text evidence="10 15 16">Mice are viable and fertile without gross morphological abnormalities but display hyperchromic anemia in animals suffering from iron deficiency (PubMed:11726526). Dramatically altered response to diet-induced iron deficiency shifting from an adaptive decrease in red blood cells (RBCs) volume and intracellular hemoglobin content to an increased production of abnormally dense red blood cells (RBCs) with decreasing red cell counts (PubMed:11726526). The decrease in RBC number is the result of increased apoptosis of erythroid precursors (PubMed:11726526). Diminished levels of phosphorylated EIF2S1 in bone marrow-derived macrophages (BMDMs) (PubMed:17932563). Impaired maturation of BMDMs and blunted inflammatory response to LPS with a reduced cytokine production. Impaired phagocytosis of senescent RBCs by macrophages, resulting in a lower phagocytosis index and lower percentage of macrophages with ingested RBC (PubMed:17932563).</text>
</comment>
<comment type="similarity">
    <text evidence="4">Belongs to the protein kinase superfamily. Ser/Thr protein kinase family. GCN2 subfamily.</text>
</comment>
<comment type="caution">
    <text evidence="23 24">Was reported, in hepatocytes, to be involved in heme-mediated translational control of CYP2B and CYP3A and possibly other hepatic P450 cytochromes. Was reported that it may also regulate endoplasmic reticulum (ER) stress during acute heme-deficient conditions. However, this paper has been retracted because of improper data manipulation, reuse, and analyses.</text>
</comment>
<comment type="sequence caution" evidence="21">
    <conflict type="erroneous initiation">
        <sequence resource="EMBL-CDS" id="BAD32438"/>
    </conflict>
    <text>Extended N-terminus.</text>
</comment>
<feature type="chain" id="PRO_0000085942" description="Eukaryotic translation initiation factor 2-alpha kinase 1">
    <location>
        <begin position="1"/>
        <end position="619"/>
    </location>
</feature>
<feature type="domain" description="Protein kinase" evidence="4">
    <location>
        <begin position="167"/>
        <end position="580"/>
    </location>
</feature>
<feature type="repeat" description="HRM 1">
    <location>
        <begin position="408"/>
        <end position="413"/>
    </location>
</feature>
<feature type="repeat" description="HRM 2">
    <location>
        <begin position="549"/>
        <end position="554"/>
    </location>
</feature>
<feature type="region of interest" description="Disordered" evidence="6">
    <location>
        <begin position="1"/>
        <end position="40"/>
    </location>
</feature>
<feature type="short sequence motif" description="SIFI-degron" evidence="3">
    <location>
        <begin position="85"/>
        <end position="104"/>
    </location>
</feature>
<feature type="compositionally biased region" description="Low complexity" evidence="6">
    <location>
        <begin position="18"/>
        <end position="28"/>
    </location>
</feature>
<feature type="active site" description="Proton acceptor" evidence="4 5">
    <location>
        <position position="440"/>
    </location>
</feature>
<feature type="binding site" evidence="4">
    <location>
        <begin position="173"/>
        <end position="181"/>
    </location>
    <ligand>
        <name>ATP</name>
        <dbReference type="ChEBI" id="CHEBI:30616"/>
    </ligand>
</feature>
<feature type="binding site" evidence="4">
    <location>
        <position position="196"/>
    </location>
    <ligand>
        <name>ATP</name>
        <dbReference type="ChEBI" id="CHEBI:30616"/>
    </ligand>
</feature>
<feature type="site" description="Heme-binding" evidence="1">
    <location>
        <position position="80"/>
    </location>
</feature>
<feature type="modified residue" description="Phosphothreonine" evidence="2">
    <location>
        <position position="283"/>
    </location>
</feature>
<feature type="modified residue" description="Phosphothreonine; by autocatalysis" evidence="11">
    <location>
        <position position="483"/>
    </location>
</feature>
<feature type="modified residue" description="Phosphothreonine; by autocatalysis" evidence="11">
    <location>
        <position position="485"/>
    </location>
</feature>
<feature type="modified residue" description="Phosphothreonine; by autocatalysis" evidence="11">
    <location>
        <position position="490"/>
    </location>
</feature>
<feature type="mutagenesis site" description="Abolishes kinase activity. Impaired hemoglobin synthesis and proliferation of differentiating erythroid cells in knockin mice." evidence="7 11 17">
    <original>K</original>
    <variation>R</variation>
    <location>
        <position position="196"/>
    </location>
</feature>
<feature type="mutagenesis site" description="No effect on kinase activity." evidence="11">
    <original>T</original>
    <variation>A</variation>
    <location>
        <position position="483"/>
    </location>
</feature>
<feature type="mutagenesis site" description="No effect on kinase activity." evidence="11">
    <original>T</original>
    <variation>D</variation>
    <location>
        <position position="483"/>
    </location>
</feature>
<feature type="mutagenesis site" description="Abolishes kinase activity." evidence="11">
    <original>T</original>
    <variation>A</variation>
    <location>
        <position position="485"/>
    </location>
</feature>
<feature type="mutagenesis site" description="Constitutively active kinase; loss of regulation by heme and arsenite." evidence="11">
    <original>T</original>
    <variation>D</variation>
    <location>
        <position position="485"/>
    </location>
</feature>
<feature type="mutagenesis site" description="Almost complete loss of kinase activity; even upon arsenite treatment." evidence="11">
    <original>T</original>
    <variation>A</variation>
    <location>
        <position position="490"/>
    </location>
</feature>
<feature type="mutagenesis site" description="Almost complete loss of kinase activity; even upon arsenite treatment." evidence="11">
    <original>T</original>
    <variation>D</variation>
    <location>
        <position position="490"/>
    </location>
</feature>
<feature type="sequence conflict" description="In Ref. 5; BAB32242." evidence="21" ref="5">
    <original>A</original>
    <variation>S</variation>
    <location>
        <position position="20"/>
    </location>
</feature>
<feature type="sequence conflict" description="In Ref. 5; BAB32242." evidence="21" ref="5">
    <original>S</original>
    <variation>C</variation>
    <location>
        <position position="71"/>
    </location>
</feature>
<feature type="sequence conflict" description="In Ref. 5; BAB32242." evidence="21" ref="5">
    <original>DPCQDNSYMQKIR</original>
    <variation>VSPTGCTLYDKYI</variation>
    <location>
        <begin position="138"/>
        <end position="150"/>
    </location>
</feature>
<feature type="sequence conflict" description="In Ref. 5; BAB29545." evidence="21" ref="5">
    <original>KK</original>
    <variation>IE</variation>
    <location>
        <begin position="196"/>
        <end position="197"/>
    </location>
</feature>
<feature type="sequence conflict" description="In Ref. 1; AAC79201 and 2; AAK55766." evidence="21" ref="1 2">
    <original>E</original>
    <variation>D</variation>
    <location>
        <position position="371"/>
    </location>
</feature>
<feature type="sequence conflict" description="In Ref. 4; AAH28923." evidence="21" ref="4">
    <original>V</original>
    <variation>A</variation>
    <location>
        <position position="565"/>
    </location>
</feature>
<reference key="1">
    <citation type="journal article" date="1998" name="J. Biol. Chem.">
        <title>Characterization of the hemin-sensitive eukaryotic initiation factor 2alpha kinase from mouse nonerythroid cells.</title>
        <authorList>
            <person name="Berlanga J.J."/>
            <person name="Herrero S."/>
            <person name="de Haro C."/>
        </authorList>
    </citation>
    <scope>NUCLEOTIDE SEQUENCE [MRNA]</scope>
    <scope>MUTAGENESIS OF LYS-196</scope>
    <scope>AUTOPHOSPHORYLATION</scope>
    <source>
        <strain>C57BL/6 X CBA</strain>
        <tissue>Liver</tissue>
    </source>
</reference>
<reference key="2">
    <citation type="journal article" date="2001" name="EMBO J.">
        <title>Heme-regulated eIF2alpha kinase (HRI) is required for translational regulation and survival of erythroid precursors in iron deficiency.</title>
        <authorList>
            <person name="Han A.-P."/>
            <person name="Yu C."/>
            <person name="Lu L."/>
            <person name="Fujiwara Y."/>
            <person name="Browne C."/>
            <person name="Chin G."/>
            <person name="Fleming M."/>
            <person name="Leboulch P."/>
            <person name="Orkin S.H."/>
            <person name="Chen J.-J."/>
        </authorList>
    </citation>
    <scope>NUCLEOTIDE SEQUENCE [MRNA]</scope>
    <scope>FUNCTION</scope>
    <scope>DISRUPTION PHENOTYPE</scope>
    <source>
        <tissue>Erythroleukemia</tissue>
    </source>
</reference>
<reference key="3">
    <citation type="journal article" date="2004" name="DNA Res.">
        <title>Prediction of the coding sequences of mouse homologues of KIAA gene: IV. The complete nucleotide sequences of 500 mouse KIAA-homologous cDNAs identified by screening of terminal sequences of cDNA clones randomly sampled from size-fractionated libraries.</title>
        <authorList>
            <person name="Okazaki N."/>
            <person name="Kikuno R."/>
            <person name="Ohara R."/>
            <person name="Inamoto S."/>
            <person name="Koseki H."/>
            <person name="Hiraoka S."/>
            <person name="Saga Y."/>
            <person name="Seino S."/>
            <person name="Nishimura M."/>
            <person name="Kaisho T."/>
            <person name="Hoshino K."/>
            <person name="Kitamura H."/>
            <person name="Nagase T."/>
            <person name="Ohara O."/>
            <person name="Koga H."/>
        </authorList>
    </citation>
    <scope>NUCLEOTIDE SEQUENCE [LARGE SCALE MRNA]</scope>
    <source>
        <tissue>Pancreatic islet</tissue>
    </source>
</reference>
<reference key="4">
    <citation type="journal article" date="2004" name="Genome Res.">
        <title>The status, quality, and expansion of the NIH full-length cDNA project: the Mammalian Gene Collection (MGC).</title>
        <authorList>
            <consortium name="The MGC Project Team"/>
        </authorList>
    </citation>
    <scope>NUCLEOTIDE SEQUENCE [LARGE SCALE MRNA]</scope>
    <source>
        <strain>C57BL/6J</strain>
        <strain>FVB/N</strain>
        <tissue>Eye</tissue>
        <tissue>Salivary gland</tissue>
    </source>
</reference>
<reference key="5">
    <citation type="journal article" date="2005" name="Science">
        <title>The transcriptional landscape of the mammalian genome.</title>
        <authorList>
            <person name="Carninci P."/>
            <person name="Kasukawa T."/>
            <person name="Katayama S."/>
            <person name="Gough J."/>
            <person name="Frith M.C."/>
            <person name="Maeda N."/>
            <person name="Oyama R."/>
            <person name="Ravasi T."/>
            <person name="Lenhard B."/>
            <person name="Wells C."/>
            <person name="Kodzius R."/>
            <person name="Shimokawa K."/>
            <person name="Bajic V.B."/>
            <person name="Brenner S.E."/>
            <person name="Batalov S."/>
            <person name="Forrest A.R."/>
            <person name="Zavolan M."/>
            <person name="Davis M.J."/>
            <person name="Wilming L.G."/>
            <person name="Aidinis V."/>
            <person name="Allen J.E."/>
            <person name="Ambesi-Impiombato A."/>
            <person name="Apweiler R."/>
            <person name="Aturaliya R.N."/>
            <person name="Bailey T.L."/>
            <person name="Bansal M."/>
            <person name="Baxter L."/>
            <person name="Beisel K.W."/>
            <person name="Bersano T."/>
            <person name="Bono H."/>
            <person name="Chalk A.M."/>
            <person name="Chiu K.P."/>
            <person name="Choudhary V."/>
            <person name="Christoffels A."/>
            <person name="Clutterbuck D.R."/>
            <person name="Crowe M.L."/>
            <person name="Dalla E."/>
            <person name="Dalrymple B.P."/>
            <person name="de Bono B."/>
            <person name="Della Gatta G."/>
            <person name="di Bernardo D."/>
            <person name="Down T."/>
            <person name="Engstrom P."/>
            <person name="Fagiolini M."/>
            <person name="Faulkner G."/>
            <person name="Fletcher C.F."/>
            <person name="Fukushima T."/>
            <person name="Furuno M."/>
            <person name="Futaki S."/>
            <person name="Gariboldi M."/>
            <person name="Georgii-Hemming P."/>
            <person name="Gingeras T.R."/>
            <person name="Gojobori T."/>
            <person name="Green R.E."/>
            <person name="Gustincich S."/>
            <person name="Harbers M."/>
            <person name="Hayashi Y."/>
            <person name="Hensch T.K."/>
            <person name="Hirokawa N."/>
            <person name="Hill D."/>
            <person name="Huminiecki L."/>
            <person name="Iacono M."/>
            <person name="Ikeo K."/>
            <person name="Iwama A."/>
            <person name="Ishikawa T."/>
            <person name="Jakt M."/>
            <person name="Kanapin A."/>
            <person name="Katoh M."/>
            <person name="Kawasawa Y."/>
            <person name="Kelso J."/>
            <person name="Kitamura H."/>
            <person name="Kitano H."/>
            <person name="Kollias G."/>
            <person name="Krishnan S.P."/>
            <person name="Kruger A."/>
            <person name="Kummerfeld S.K."/>
            <person name="Kurochkin I.V."/>
            <person name="Lareau L.F."/>
            <person name="Lazarevic D."/>
            <person name="Lipovich L."/>
            <person name="Liu J."/>
            <person name="Liuni S."/>
            <person name="McWilliam S."/>
            <person name="Madan Babu M."/>
            <person name="Madera M."/>
            <person name="Marchionni L."/>
            <person name="Matsuda H."/>
            <person name="Matsuzawa S."/>
            <person name="Miki H."/>
            <person name="Mignone F."/>
            <person name="Miyake S."/>
            <person name="Morris K."/>
            <person name="Mottagui-Tabar S."/>
            <person name="Mulder N."/>
            <person name="Nakano N."/>
            <person name="Nakauchi H."/>
            <person name="Ng P."/>
            <person name="Nilsson R."/>
            <person name="Nishiguchi S."/>
            <person name="Nishikawa S."/>
            <person name="Nori F."/>
            <person name="Ohara O."/>
            <person name="Okazaki Y."/>
            <person name="Orlando V."/>
            <person name="Pang K.C."/>
            <person name="Pavan W.J."/>
            <person name="Pavesi G."/>
            <person name="Pesole G."/>
            <person name="Petrovsky N."/>
            <person name="Piazza S."/>
            <person name="Reed J."/>
            <person name="Reid J.F."/>
            <person name="Ring B.Z."/>
            <person name="Ringwald M."/>
            <person name="Rost B."/>
            <person name="Ruan Y."/>
            <person name="Salzberg S.L."/>
            <person name="Sandelin A."/>
            <person name="Schneider C."/>
            <person name="Schoenbach C."/>
            <person name="Sekiguchi K."/>
            <person name="Semple C.A."/>
            <person name="Seno S."/>
            <person name="Sessa L."/>
            <person name="Sheng Y."/>
            <person name="Shibata Y."/>
            <person name="Shimada H."/>
            <person name="Shimada K."/>
            <person name="Silva D."/>
            <person name="Sinclair B."/>
            <person name="Sperling S."/>
            <person name="Stupka E."/>
            <person name="Sugiura K."/>
            <person name="Sultana R."/>
            <person name="Takenaka Y."/>
            <person name="Taki K."/>
            <person name="Tammoja K."/>
            <person name="Tan S.L."/>
            <person name="Tang S."/>
            <person name="Taylor M.S."/>
            <person name="Tegner J."/>
            <person name="Teichmann S.A."/>
            <person name="Ueda H.R."/>
            <person name="van Nimwegen E."/>
            <person name="Verardo R."/>
            <person name="Wei C.L."/>
            <person name="Yagi K."/>
            <person name="Yamanishi H."/>
            <person name="Zabarovsky E."/>
            <person name="Zhu S."/>
            <person name="Zimmer A."/>
            <person name="Hide W."/>
            <person name="Bult C."/>
            <person name="Grimmond S.M."/>
            <person name="Teasdale R.D."/>
            <person name="Liu E.T."/>
            <person name="Brusic V."/>
            <person name="Quackenbush J."/>
            <person name="Wahlestedt C."/>
            <person name="Mattick J.S."/>
            <person name="Hume D.A."/>
            <person name="Kai C."/>
            <person name="Sasaki D."/>
            <person name="Tomaru Y."/>
            <person name="Fukuda S."/>
            <person name="Kanamori-Katayama M."/>
            <person name="Suzuki M."/>
            <person name="Aoki J."/>
            <person name="Arakawa T."/>
            <person name="Iida J."/>
            <person name="Imamura K."/>
            <person name="Itoh M."/>
            <person name="Kato T."/>
            <person name="Kawaji H."/>
            <person name="Kawagashira N."/>
            <person name="Kawashima T."/>
            <person name="Kojima M."/>
            <person name="Kondo S."/>
            <person name="Konno H."/>
            <person name="Nakano K."/>
            <person name="Ninomiya N."/>
            <person name="Nishio T."/>
            <person name="Okada M."/>
            <person name="Plessy C."/>
            <person name="Shibata K."/>
            <person name="Shiraki T."/>
            <person name="Suzuki S."/>
            <person name="Tagami M."/>
            <person name="Waki K."/>
            <person name="Watahiki A."/>
            <person name="Okamura-Oho Y."/>
            <person name="Suzuki H."/>
            <person name="Kawai J."/>
            <person name="Hayashizaki Y."/>
        </authorList>
    </citation>
    <scope>NUCLEOTIDE SEQUENCE [LARGE SCALE MRNA] OF 1-211 AND 445-619</scope>
    <source>
        <strain>C57BL/6J</strain>
        <tissue>Head</tissue>
        <tissue>Olfactory bulb</tissue>
        <tissue>Retina</tissue>
    </source>
</reference>
<reference key="6">
    <citation type="journal article" date="2000" name="Blood">
        <title>Regulation of hemoglobin synthesis and proliferation of differentiating erythroid cells by heme-regulated eIF-2alpha kinase.</title>
        <authorList>
            <person name="Crosby J.S."/>
            <person name="Chefalo P.J."/>
            <person name="Yeh I."/>
            <person name="Ying S."/>
            <person name="London I.M."/>
            <person name="Leboulch P."/>
            <person name="Chen J.J."/>
        </authorList>
    </citation>
    <scope>FUNCTION</scope>
    <scope>SUBCELLULAR LOCATION</scope>
    <scope>MUTAGENESIS OF LYS-196</scope>
</reference>
<reference key="7">
    <citation type="journal article" date="2001" name="Biochemistry">
        <title>Multiple autophosphorylation is essential for the formation of the active and stable homodimer of heme-regulated eIF2alpha kinase.</title>
        <authorList>
            <person name="Bauer B.N."/>
            <person name="Rafie-Kolpin M."/>
            <person name="Lu L."/>
            <person name="Han A."/>
            <person name="Chen J.-J."/>
        </authorList>
    </citation>
    <scope>AUTOPHOSPHORYLATION</scope>
    <scope>HEME-BINDING</scope>
</reference>
<reference key="8">
    <citation type="journal article" date="2001" name="Mol. Cell. Biol.">
        <title>Translation initiation control by heme-regulated eukaryotic initiation factor 2alpha kinase in erythroid cells under cytoplasmic stresses.</title>
        <authorList>
            <person name="Lu L."/>
            <person name="Han A.P."/>
            <person name="Chen J.J."/>
        </authorList>
    </citation>
    <scope>REGULATION BY HEME DEFICIENCY; HEAT SHOCK; OSMOTIC STRESS AND OXIDATIVE STRESS</scope>
    <scope>TISSUE SPECIFICITY</scope>
</reference>
<reference key="9">
    <citation type="journal article" date="2003" name="Biochemistry">
        <title>Autophosphorylation of threonine 485 in the activation loop is essential for attaining eIF2alpha kinase activity of HRI.</title>
        <authorList>
            <person name="Rafie-Kolpin M."/>
            <person name="Han A.P."/>
            <person name="Chen J.J."/>
        </authorList>
    </citation>
    <scope>CATALYTIC ACTIVITY</scope>
    <scope>FUNCTION</scope>
    <scope>PHOSPHORYLATION AT THR-483; THR-485 AND THR-490</scope>
    <scope>ACTIVITY REGULATION</scope>
    <scope>MUTAGENESIS OF LYS-196; THR-483; THR-485 AND THR-490</scope>
</reference>
<reference key="10">
    <citation type="journal article" date="2004" name="J. Biol. Chem.">
        <title>Activation of heme-regulated eukaryotic initiation factor 2alpha kinase by nitric oxide is induced by the formation of a five-coordinate NO-heme complex: optical absorption, electron spin resonance, and resonance raman spectral studies.</title>
        <authorList>
            <person name="Igarashi J."/>
            <person name="Sato A."/>
            <person name="Kitagawa T."/>
            <person name="Yoshimura T."/>
            <person name="Yamauchi S."/>
            <person name="Sagami I."/>
            <person name="Shimizu T."/>
        </authorList>
    </citation>
    <scope>HEME-BINDING</scope>
    <scope>ACTIVITY REGULATION</scope>
</reference>
<reference key="11">
    <citation type="journal article" date="2005" name="J. Clin. Invest.">
        <title>Heme-regulated eIF2alpha kinase modifies the phenotypic severity of murine models of erythropoietic protoporphyria and beta-thalassemia.</title>
        <authorList>
            <person name="Han A.P."/>
            <person name="Fleming M.D."/>
            <person name="Chen J.J."/>
        </authorList>
    </citation>
    <scope>FUNCTION</scope>
</reference>
<reference key="12">
    <citation type="journal article" date="2006" name="Biochemistry">
        <title>Characterization of heme-regulated eIF2alpha kinase: roles of the N-terminal domain in the oligomeric state, heme binding, catalysis, and inhibition.</title>
        <authorList>
            <person name="Miksanova M."/>
            <person name="Igarashi J."/>
            <person name="Minami M."/>
            <person name="Sagami I."/>
            <person name="Yamauchi S."/>
            <person name="Kurokawa H."/>
            <person name="Shimizu T."/>
        </authorList>
    </citation>
    <scope>FUNCTION</scope>
    <scope>ACTIVITY REGULATION</scope>
    <scope>OLIGOMERIZATION</scope>
    <scope>HEME-BINDING</scope>
    <scope>INDUCTION</scope>
</reference>
<reference key="13">
    <citation type="journal article" date="2007" name="J. Clin. Invest.">
        <title>The function of heme-regulated eIF2alpha kinase in murine iron homeostasis and macrophage maturation.</title>
        <authorList>
            <person name="Liu S."/>
            <person name="Suragani R.N."/>
            <person name="Wang F."/>
            <person name="Han A."/>
            <person name="Zhao W."/>
            <person name="Andrews N.C."/>
            <person name="Chen J.J."/>
        </authorList>
    </citation>
    <scope>SUBCELLULAR LOCATION</scope>
    <scope>TISSUE SPECIFICITY</scope>
    <scope>DEVELOPMENTAL STAGE</scope>
    <scope>DISRUPTION PHENOTYPE</scope>
</reference>
<reference key="14">
    <citation type="journal article" date="2010" name="Cell">
        <title>A tissue-specific atlas of mouse protein phosphorylation and expression.</title>
        <authorList>
            <person name="Huttlin E.L."/>
            <person name="Jedrychowski M.P."/>
            <person name="Elias J.E."/>
            <person name="Goswami T."/>
            <person name="Rad R."/>
            <person name="Beausoleil S.A."/>
            <person name="Villen J."/>
            <person name="Haas W."/>
            <person name="Sowa M.E."/>
            <person name="Gygi S.P."/>
        </authorList>
    </citation>
    <scope>IDENTIFICATION BY MASS SPECTROMETRY [LARGE SCALE ANALYSIS]</scope>
    <source>
        <tissue>Spleen</tissue>
    </source>
</reference>
<reference key="15">
    <citation type="journal article" date="2010" name="Mol. Pharmacol.">
        <title>Hepatic heme-regulated inhibitor (HRI) eukaryotic initiation factor 2alpha kinase: a protagonist of heme-mediated translational control of CYP2B enzymes and a modulator of basal endoplasmic reticulum stress tone.</title>
        <authorList>
            <person name="Acharya P."/>
            <person name="Chen J.J."/>
            <person name="Correia M.A."/>
        </authorList>
    </citation>
    <scope>RETRACTED PAPER</scope>
</reference>
<reference key="16">
    <citation type="journal article" date="2021" name="Mol. Pharmacol.">
        <title>Notice of Retraction: Acharya P, Chen J-J, Correia MA (2010) Hepatic heme-regulated inhibitor (HRI) eukaryotic initiation factor 2alpha kinase: a protagonist of heme-mediated translational control of CYP2B enzymes and a modulator of basal endoplasmic reticulum stress tone. Mol Pharmacol 77(4):575-592; doi:10.1124/mol.109.061259.</title>
        <authorList>
            <person name="Acharya P."/>
            <person name="Chen J.J."/>
            <person name="Correia M.A."/>
        </authorList>
    </citation>
    <scope>RETRACTION NOTICE OF PUBMED:20071449</scope>
</reference>
<gene>
    <name evidence="26" type="primary">Eif2ak1</name>
    <name evidence="19" type="synonym">Hri</name>
</gene>
<accession>Q9Z2R9</accession>
<accession>Q2TA96</accession>
<accession>Q69ZK8</accession>
<accession>Q8C024</accession>
<accession>Q8K123</accession>
<accession>Q9CTP5</accession>
<accession>Q9D601</accession>
<sequence length="619" mass="69702">MLGGSSVDGERDTDDDAAGAVAAPPAIDFPAEVSDPKYDESDVPAELQVLKEPLQQPTFPFLVANQLLLVSLLEHLSHVHEPNPLHSKQVFKLLCQTFIKMGLLSSFTCSDEFSSLRLHHNRAITHLMRSAKERVRQDPCQDNSYMQKIRSREIAFEAQTSRYLNEFEELAILGKGGYGRVYKVRNKLDGQHYAIKKILIKSATKTDCMKVLREVKVLAGLQHPNIVGYHTAWIEHVHVVQPQDRVPIQLPSLEVLSEQEGDRDQGGVKDNESSSSIVFAELTPEKEKPFGESEVKNENNNLVSYTANLVVRNSSESESSIELQEDGLTDLSVRPVVRHQLPLGHSSELEGNFTSTDESSEGNLNLLGQTEVRYHLMLHIQMQLCELSLWDWITERNKRSREYVDEAACPYVMASVATKIFQELVEGVFYIHNMGIVHRDLKPRNIFLHGPDQQVKIGDFGLACADIIQNADWTNRNGKGTRTHTSRVGTCLYASPEQLEGSQYDAKSDMYSLGVILLELFQPFGTEMERATVLTGVRTGRIPESLSKRCPVQAKYIQLLTGRNVSQRPSALQLLQSELFQTTGNVNLTLQMKIIEQEKEIEELKKQLSLLSQDRGLKR</sequence>
<dbReference type="EC" id="2.7.11.1" evidence="11 22 25"/>
<dbReference type="EMBL" id="AF028808">
    <property type="protein sequence ID" value="AAC79201.1"/>
    <property type="molecule type" value="mRNA"/>
</dbReference>
<dbReference type="EMBL" id="AY033898">
    <property type="protein sequence ID" value="AAK55766.1"/>
    <property type="molecule type" value="mRNA"/>
</dbReference>
<dbReference type="EMBL" id="AK173160">
    <property type="protein sequence ID" value="BAD32438.1"/>
    <property type="status" value="ALT_INIT"/>
    <property type="molecule type" value="mRNA"/>
</dbReference>
<dbReference type="EMBL" id="BC028923">
    <property type="protein sequence ID" value="AAH28923.1"/>
    <property type="molecule type" value="mRNA"/>
</dbReference>
<dbReference type="EMBL" id="BC111035">
    <property type="protein sequence ID" value="AAI11036.1"/>
    <property type="molecule type" value="mRNA"/>
</dbReference>
<dbReference type="EMBL" id="AK014775">
    <property type="protein sequence ID" value="BAB29545.1"/>
    <property type="molecule type" value="mRNA"/>
</dbReference>
<dbReference type="EMBL" id="AK020887">
    <property type="protein sequence ID" value="BAB32242.1"/>
    <property type="molecule type" value="mRNA"/>
</dbReference>
<dbReference type="EMBL" id="AK032508">
    <property type="protein sequence ID" value="BAC27901.1"/>
    <property type="molecule type" value="mRNA"/>
</dbReference>
<dbReference type="CCDS" id="CCDS84994.1"/>
<dbReference type="RefSeq" id="NP_038585.2">
    <property type="nucleotide sequence ID" value="NM_013557.3"/>
</dbReference>
<dbReference type="BioGRID" id="200421">
    <property type="interactions" value="1"/>
</dbReference>
<dbReference type="FunCoup" id="Q9Z2R9">
    <property type="interactions" value="2370"/>
</dbReference>
<dbReference type="IntAct" id="Q9Z2R9">
    <property type="interactions" value="2"/>
</dbReference>
<dbReference type="MINT" id="Q9Z2R9"/>
<dbReference type="STRING" id="10090.ENSMUSP00000098056"/>
<dbReference type="ChEMBL" id="CHEMBL1938213"/>
<dbReference type="iPTMnet" id="Q9Z2R9"/>
<dbReference type="PhosphoSitePlus" id="Q9Z2R9"/>
<dbReference type="PaxDb" id="10090-ENSMUSP00000098056"/>
<dbReference type="ProteomicsDB" id="277662"/>
<dbReference type="Antibodypedia" id="11579">
    <property type="antibodies" value="314 antibodies from 30 providers"/>
</dbReference>
<dbReference type="DNASU" id="15467"/>
<dbReference type="Ensembl" id="ENSMUST00000100487.6">
    <property type="protein sequence ID" value="ENSMUSP00000098056.5"/>
    <property type="gene ID" value="ENSMUSG00000029613.16"/>
</dbReference>
<dbReference type="GeneID" id="15467"/>
<dbReference type="KEGG" id="mmu:15467"/>
<dbReference type="UCSC" id="uc029vqe.1">
    <property type="organism name" value="mouse"/>
</dbReference>
<dbReference type="AGR" id="MGI:1353448"/>
<dbReference type="CTD" id="27102"/>
<dbReference type="MGI" id="MGI:1353448">
    <property type="gene designation" value="Eif2ak1"/>
</dbReference>
<dbReference type="VEuPathDB" id="HostDB:ENSMUSG00000029613"/>
<dbReference type="eggNOG" id="KOG1035">
    <property type="taxonomic scope" value="Eukaryota"/>
</dbReference>
<dbReference type="GeneTree" id="ENSGT00940000157605"/>
<dbReference type="HOGENOM" id="CLU_000288_134_1_1"/>
<dbReference type="InParanoid" id="Q9Z2R9"/>
<dbReference type="OMA" id="WDWIADR"/>
<dbReference type="OrthoDB" id="1405469at2759"/>
<dbReference type="PhylomeDB" id="Q9Z2R9"/>
<dbReference type="TreeFam" id="TF329383"/>
<dbReference type="Reactome" id="R-MMU-9840373">
    <property type="pathway name" value="Cellular response to mitochondrial stress"/>
</dbReference>
<dbReference type="BioGRID-ORCS" id="15467">
    <property type="hits" value="2 hits in 57 CRISPR screens"/>
</dbReference>
<dbReference type="ChiTaRS" id="Eif2ak1">
    <property type="organism name" value="mouse"/>
</dbReference>
<dbReference type="PRO" id="PR:Q9Z2R9"/>
<dbReference type="Proteomes" id="UP000000589">
    <property type="component" value="Chromosome 5"/>
</dbReference>
<dbReference type="RNAct" id="Q9Z2R9">
    <property type="molecule type" value="protein"/>
</dbReference>
<dbReference type="Bgee" id="ENSMUSG00000029613">
    <property type="expression patterns" value="Expressed in fetal liver hematopoietic progenitor cell and 253 other cell types or tissues"/>
</dbReference>
<dbReference type="GO" id="GO:0005737">
    <property type="term" value="C:cytoplasm"/>
    <property type="evidence" value="ECO:0000314"/>
    <property type="project" value="UniProtKB"/>
</dbReference>
<dbReference type="GO" id="GO:0005829">
    <property type="term" value="C:cytosol"/>
    <property type="evidence" value="ECO:0000304"/>
    <property type="project" value="Reactome"/>
</dbReference>
<dbReference type="GO" id="GO:0005524">
    <property type="term" value="F:ATP binding"/>
    <property type="evidence" value="ECO:0007669"/>
    <property type="project" value="UniProtKB-KW"/>
</dbReference>
<dbReference type="GO" id="GO:0004694">
    <property type="term" value="F:eukaryotic translation initiation factor 2alpha kinase activity"/>
    <property type="evidence" value="ECO:0000250"/>
    <property type="project" value="UniProtKB"/>
</dbReference>
<dbReference type="GO" id="GO:0020037">
    <property type="term" value="F:heme binding"/>
    <property type="evidence" value="ECO:0000314"/>
    <property type="project" value="UniProtKB"/>
</dbReference>
<dbReference type="GO" id="GO:0042803">
    <property type="term" value="F:protein homodimerization activity"/>
    <property type="evidence" value="ECO:0000353"/>
    <property type="project" value="UniProtKB"/>
</dbReference>
<dbReference type="GO" id="GO:0004672">
    <property type="term" value="F:protein kinase activity"/>
    <property type="evidence" value="ECO:0000315"/>
    <property type="project" value="MGI"/>
</dbReference>
<dbReference type="GO" id="GO:0106310">
    <property type="term" value="F:protein serine kinase activity"/>
    <property type="evidence" value="ECO:0007669"/>
    <property type="project" value="RHEA"/>
</dbReference>
<dbReference type="GO" id="GO:0002526">
    <property type="term" value="P:acute inflammatory response"/>
    <property type="evidence" value="ECO:0000315"/>
    <property type="project" value="MGI"/>
</dbReference>
<dbReference type="GO" id="GO:0051649">
    <property type="term" value="P:establishment of localization in cell"/>
    <property type="evidence" value="ECO:0000315"/>
    <property type="project" value="MGI"/>
</dbReference>
<dbReference type="GO" id="GO:0140468">
    <property type="term" value="P:HRI-mediated signaling"/>
    <property type="evidence" value="ECO:0000250"/>
    <property type="project" value="UniProtKB"/>
</dbReference>
<dbReference type="GO" id="GO:0140467">
    <property type="term" value="P:integrated stress response signaling"/>
    <property type="evidence" value="ECO:0000250"/>
    <property type="project" value="UniProtKB"/>
</dbReference>
<dbReference type="GO" id="GO:0030225">
    <property type="term" value="P:macrophage differentiation"/>
    <property type="evidence" value="ECO:0000315"/>
    <property type="project" value="MGI"/>
</dbReference>
<dbReference type="GO" id="GO:0060586">
    <property type="term" value="P:multicellular organismal-level iron ion homeostasis"/>
    <property type="evidence" value="ECO:0000315"/>
    <property type="project" value="MGI"/>
</dbReference>
<dbReference type="GO" id="GO:0008285">
    <property type="term" value="P:negative regulation of cell population proliferation"/>
    <property type="evidence" value="ECO:0000314"/>
    <property type="project" value="UniProtKB"/>
</dbReference>
<dbReference type="GO" id="GO:0046986">
    <property type="term" value="P:negative regulation of hemoglobin biosynthetic process"/>
    <property type="evidence" value="ECO:0000314"/>
    <property type="project" value="UniProtKB"/>
</dbReference>
<dbReference type="GO" id="GO:0017148">
    <property type="term" value="P:negative regulation of translation"/>
    <property type="evidence" value="ECO:0007669"/>
    <property type="project" value="UniProtKB-KW"/>
</dbReference>
<dbReference type="GO" id="GO:0006909">
    <property type="term" value="P:phagocytosis"/>
    <property type="evidence" value="ECO:0000315"/>
    <property type="project" value="MGI"/>
</dbReference>
<dbReference type="GO" id="GO:1901526">
    <property type="term" value="P:positive regulation of mitophagy"/>
    <property type="evidence" value="ECO:0000250"/>
    <property type="project" value="UniProtKB"/>
</dbReference>
<dbReference type="GO" id="GO:0046777">
    <property type="term" value="P:protein autophosphorylation"/>
    <property type="evidence" value="ECO:0000270"/>
    <property type="project" value="UniProtKB"/>
</dbReference>
<dbReference type="GO" id="GO:0070585">
    <property type="term" value="P:protein localization to mitochondrion"/>
    <property type="evidence" value="ECO:0007669"/>
    <property type="project" value="Ensembl"/>
</dbReference>
<dbReference type="GO" id="GO:0046501">
    <property type="term" value="P:protoporphyrinogen IX metabolic process"/>
    <property type="evidence" value="ECO:0000316"/>
    <property type="project" value="MGI"/>
</dbReference>
<dbReference type="GO" id="GO:0046984">
    <property type="term" value="P:regulation of hemoglobin biosynthetic process"/>
    <property type="evidence" value="ECO:0000316"/>
    <property type="project" value="MGI"/>
</dbReference>
<dbReference type="GO" id="GO:0006417">
    <property type="term" value="P:regulation of translation"/>
    <property type="evidence" value="ECO:0000315"/>
    <property type="project" value="MGI"/>
</dbReference>
<dbReference type="GO" id="GO:1990641">
    <property type="term" value="P:response to iron ion starvation"/>
    <property type="evidence" value="ECO:0000250"/>
    <property type="project" value="UniProtKB"/>
</dbReference>
<dbReference type="CDD" id="cd14049">
    <property type="entry name" value="STKc_EIF2AK1_HRI"/>
    <property type="match status" value="1"/>
</dbReference>
<dbReference type="FunFam" id="3.30.200.20:FF:000380">
    <property type="entry name" value="Eukaryotic translation initiation factor 2 alpha kinase 1"/>
    <property type="match status" value="1"/>
</dbReference>
<dbReference type="FunFam" id="1.10.510.10:FF:000375">
    <property type="entry name" value="Putative eukaryotic translation initiation factor 2-alpha kinase 1"/>
    <property type="match status" value="1"/>
</dbReference>
<dbReference type="Gene3D" id="3.30.200.20">
    <property type="entry name" value="Phosphorylase Kinase, domain 1"/>
    <property type="match status" value="1"/>
</dbReference>
<dbReference type="Gene3D" id="1.10.510.10">
    <property type="entry name" value="Transferase(Phosphotransferase) domain 1"/>
    <property type="match status" value="1"/>
</dbReference>
<dbReference type="InterPro" id="IPR050339">
    <property type="entry name" value="CC_SR_Kinase"/>
</dbReference>
<dbReference type="InterPro" id="IPR054521">
    <property type="entry name" value="HRI2_3H"/>
</dbReference>
<dbReference type="InterPro" id="IPR011009">
    <property type="entry name" value="Kinase-like_dom_sf"/>
</dbReference>
<dbReference type="InterPro" id="IPR000719">
    <property type="entry name" value="Prot_kinase_dom"/>
</dbReference>
<dbReference type="InterPro" id="IPR017441">
    <property type="entry name" value="Protein_kinase_ATP_BS"/>
</dbReference>
<dbReference type="InterPro" id="IPR008271">
    <property type="entry name" value="Ser/Thr_kinase_AS"/>
</dbReference>
<dbReference type="PANTHER" id="PTHR11042:SF160">
    <property type="entry name" value="EUKARYOTIC TRANSLATION INITIATION FACTOR 2-ALPHA KINASE 1"/>
    <property type="match status" value="1"/>
</dbReference>
<dbReference type="PANTHER" id="PTHR11042">
    <property type="entry name" value="EUKARYOTIC TRANSLATION INITIATION FACTOR 2-ALPHA KINASE EIF2-ALPHA KINASE -RELATED"/>
    <property type="match status" value="1"/>
</dbReference>
<dbReference type="Pfam" id="PF22949">
    <property type="entry name" value="HRI2_3H"/>
    <property type="match status" value="1"/>
</dbReference>
<dbReference type="Pfam" id="PF00069">
    <property type="entry name" value="Pkinase"/>
    <property type="match status" value="2"/>
</dbReference>
<dbReference type="SMART" id="SM00220">
    <property type="entry name" value="S_TKc"/>
    <property type="match status" value="1"/>
</dbReference>
<dbReference type="SUPFAM" id="SSF56112">
    <property type="entry name" value="Protein kinase-like (PK-like)"/>
    <property type="match status" value="1"/>
</dbReference>
<dbReference type="PROSITE" id="PS00107">
    <property type="entry name" value="PROTEIN_KINASE_ATP"/>
    <property type="match status" value="1"/>
</dbReference>
<dbReference type="PROSITE" id="PS50011">
    <property type="entry name" value="PROTEIN_KINASE_DOM"/>
    <property type="match status" value="1"/>
</dbReference>
<dbReference type="PROSITE" id="PS00108">
    <property type="entry name" value="PROTEIN_KINASE_ST"/>
    <property type="match status" value="1"/>
</dbReference>
<organism>
    <name type="scientific">Mus musculus</name>
    <name type="common">Mouse</name>
    <dbReference type="NCBI Taxonomy" id="10090"/>
    <lineage>
        <taxon>Eukaryota</taxon>
        <taxon>Metazoa</taxon>
        <taxon>Chordata</taxon>
        <taxon>Craniata</taxon>
        <taxon>Vertebrata</taxon>
        <taxon>Euteleostomi</taxon>
        <taxon>Mammalia</taxon>
        <taxon>Eutheria</taxon>
        <taxon>Euarchontoglires</taxon>
        <taxon>Glires</taxon>
        <taxon>Rodentia</taxon>
        <taxon>Myomorpha</taxon>
        <taxon>Muroidea</taxon>
        <taxon>Muridae</taxon>
        <taxon>Murinae</taxon>
        <taxon>Mus</taxon>
        <taxon>Mus</taxon>
    </lineage>
</organism>